<comment type="function">
    <text evidence="1">Acts as a sulfur carrier required for 2-thiolation of mcm(5)S(2)U at tRNA wobble positions of cytosolic tRNA(Lys), tRNA(Glu) and tRNA(Gln). Serves as sulfur donor in tRNA 2-thiolation reaction by being thiocarboxylated (-COSH) at its C-terminus by the MOCS3 homolog UBA4. The sulfur is then transferred to tRNA to form 2-thiolation of mcm(5)S(2)U. Prior mcm(5) tRNA modification by the elongator complex is required for 2-thiolation. Also acts as a ubiquitin-like protein (UBL) that is covalently conjugated via an isopeptide bond to lysine residues of target proteins such as AHP1. The thiocarboxylated form serves as substrate for conjugation and oxidative stress specifically induces the formation of UBL-protein conjugates.</text>
</comment>
<comment type="pathway">
    <text evidence="1">tRNA modification; 5-methoxycarbonylmethyl-2-thiouridine-tRNA biosynthesis.</text>
</comment>
<comment type="subcellular location">
    <subcellularLocation>
        <location evidence="1">Cytoplasm</location>
    </subcellularLocation>
</comment>
<comment type="PTM">
    <text evidence="1">C-terminal thiocarboxylation occurs in 2 steps, it is first acyl-adenylated (-COAMP) via the hesA/moeB/thiF part of UBA4, then thiocarboxylated (-COSH) via the rhodanese domain of UBA4.</text>
</comment>
<comment type="similarity">
    <text evidence="1">Belongs to the URM1 family.</text>
</comment>
<organism>
    <name type="scientific">Coprinopsis cinerea (strain Okayama-7 / 130 / ATCC MYA-4618 / FGSC 9003)</name>
    <name type="common">Inky cap fungus</name>
    <name type="synonym">Hormographiella aspergillata</name>
    <dbReference type="NCBI Taxonomy" id="240176"/>
    <lineage>
        <taxon>Eukaryota</taxon>
        <taxon>Fungi</taxon>
        <taxon>Dikarya</taxon>
        <taxon>Basidiomycota</taxon>
        <taxon>Agaricomycotina</taxon>
        <taxon>Agaricomycetes</taxon>
        <taxon>Agaricomycetidae</taxon>
        <taxon>Agaricales</taxon>
        <taxon>Agaricineae</taxon>
        <taxon>Psathyrellaceae</taxon>
        <taxon>Coprinopsis</taxon>
    </lineage>
</organism>
<proteinExistence type="inferred from homology"/>
<reference key="1">
    <citation type="journal article" date="2010" name="Proc. Natl. Acad. Sci. U.S.A.">
        <title>Insights into evolution of multicellular fungi from the assembled chromosomes of the mushroom Coprinopsis cinerea (Coprinus cinereus).</title>
        <authorList>
            <person name="Stajich J.E."/>
            <person name="Wilke S.K."/>
            <person name="Ahren D."/>
            <person name="Au C.H."/>
            <person name="Birren B.W."/>
            <person name="Borodovsky M."/>
            <person name="Burns C."/>
            <person name="Canbaeck B."/>
            <person name="Casselton L.A."/>
            <person name="Cheng C.K."/>
            <person name="Deng J."/>
            <person name="Dietrich F.S."/>
            <person name="Fargo D.C."/>
            <person name="Farman M.L."/>
            <person name="Gathman A.C."/>
            <person name="Goldberg J."/>
            <person name="Guigo R."/>
            <person name="Hoegger P.J."/>
            <person name="Hooker J.B."/>
            <person name="Huggins A."/>
            <person name="James T.Y."/>
            <person name="Kamada T."/>
            <person name="Kilaru S."/>
            <person name="Kodira C."/>
            <person name="Kuees U."/>
            <person name="Kupfer D."/>
            <person name="Kwan H.S."/>
            <person name="Lomsadze A."/>
            <person name="Li W."/>
            <person name="Lilly W.W."/>
            <person name="Ma L.-J."/>
            <person name="Mackey A.J."/>
            <person name="Manning G."/>
            <person name="Martin F."/>
            <person name="Muraguchi H."/>
            <person name="Natvig D.O."/>
            <person name="Palmerini H."/>
            <person name="Ramesh M.A."/>
            <person name="Rehmeyer C.J."/>
            <person name="Roe B.A."/>
            <person name="Shenoy N."/>
            <person name="Stanke M."/>
            <person name="Ter-Hovhannisyan V."/>
            <person name="Tunlid A."/>
            <person name="Velagapudi R."/>
            <person name="Vision T.J."/>
            <person name="Zeng Q."/>
            <person name="Zolan M.E."/>
            <person name="Pukkila P.J."/>
        </authorList>
    </citation>
    <scope>NUCLEOTIDE SEQUENCE [LARGE SCALE GENOMIC DNA]</scope>
    <source>
        <strain>Okayama-7 / 130 / ATCC MYA-4618 / FGSC 9003</strain>
    </source>
</reference>
<gene>
    <name evidence="1" type="primary">URM1</name>
    <name type="ORF">CC1G_11440</name>
</gene>
<sequence length="124" mass="13788">MAEPTPTTTLNIKIEFGGGLELLFSNQRSHKVSIPSLVPKDNTTSAKNPPPKDDLLKPADITYLIHHMRDHLLQEREELFVENGTVRPGILVLVNDTDWELEGEGDYVLKDGDEVVFISTLHGG</sequence>
<dbReference type="EMBL" id="AACS02000006">
    <property type="protein sequence ID" value="EAU84002.1"/>
    <property type="molecule type" value="Genomic_DNA"/>
</dbReference>
<dbReference type="RefSeq" id="XP_001837795.1">
    <property type="nucleotide sequence ID" value="XM_001837743.1"/>
</dbReference>
<dbReference type="SMR" id="A8P008"/>
<dbReference type="FunCoup" id="A8P008">
    <property type="interactions" value="371"/>
</dbReference>
<dbReference type="STRING" id="240176.A8P008"/>
<dbReference type="GeneID" id="6014355"/>
<dbReference type="KEGG" id="cci:CC1G_11440"/>
<dbReference type="VEuPathDB" id="FungiDB:CC1G_11440"/>
<dbReference type="eggNOG" id="KOG4146">
    <property type="taxonomic scope" value="Eukaryota"/>
</dbReference>
<dbReference type="HOGENOM" id="CLU_148208_0_0_1"/>
<dbReference type="InParanoid" id="A8P008"/>
<dbReference type="OMA" id="DYELQPN"/>
<dbReference type="OrthoDB" id="10248987at2759"/>
<dbReference type="UniPathway" id="UPA00988"/>
<dbReference type="Proteomes" id="UP000001861">
    <property type="component" value="Unassembled WGS sequence"/>
</dbReference>
<dbReference type="GO" id="GO:0005829">
    <property type="term" value="C:cytosol"/>
    <property type="evidence" value="ECO:0007669"/>
    <property type="project" value="UniProtKB-UniRule"/>
</dbReference>
<dbReference type="GO" id="GO:0032447">
    <property type="term" value="P:protein urmylation"/>
    <property type="evidence" value="ECO:0007669"/>
    <property type="project" value="UniProtKB-UniRule"/>
</dbReference>
<dbReference type="GO" id="GO:0034227">
    <property type="term" value="P:tRNA thio-modification"/>
    <property type="evidence" value="ECO:0007669"/>
    <property type="project" value="UniProtKB-UniRule"/>
</dbReference>
<dbReference type="GO" id="GO:0002098">
    <property type="term" value="P:tRNA wobble uridine modification"/>
    <property type="evidence" value="ECO:0007669"/>
    <property type="project" value="UniProtKB-UniRule"/>
</dbReference>
<dbReference type="CDD" id="cd01764">
    <property type="entry name" value="Ubl_Urm1"/>
    <property type="match status" value="1"/>
</dbReference>
<dbReference type="Gene3D" id="3.10.20.30">
    <property type="match status" value="1"/>
</dbReference>
<dbReference type="HAMAP" id="MF_03048">
    <property type="entry name" value="Urm1"/>
    <property type="match status" value="1"/>
</dbReference>
<dbReference type="InterPro" id="IPR012675">
    <property type="entry name" value="Beta-grasp_dom_sf"/>
</dbReference>
<dbReference type="InterPro" id="IPR016155">
    <property type="entry name" value="Mopterin_synth/thiamin_S_b"/>
</dbReference>
<dbReference type="InterPro" id="IPR015221">
    <property type="entry name" value="Urm1"/>
</dbReference>
<dbReference type="PANTHER" id="PTHR14986">
    <property type="entry name" value="RURM1 PROTEIN"/>
    <property type="match status" value="1"/>
</dbReference>
<dbReference type="Pfam" id="PF09138">
    <property type="entry name" value="Urm1"/>
    <property type="match status" value="1"/>
</dbReference>
<dbReference type="PIRSF" id="PIRSF037379">
    <property type="entry name" value="Ubiquitin-related_modifier_1"/>
    <property type="match status" value="1"/>
</dbReference>
<dbReference type="SUPFAM" id="SSF54285">
    <property type="entry name" value="MoaD/ThiS"/>
    <property type="match status" value="1"/>
</dbReference>
<protein>
    <recommendedName>
        <fullName evidence="1">Ubiquitin-related modifier 1</fullName>
    </recommendedName>
</protein>
<accession>A8P008</accession>
<feature type="chain" id="PRO_0000367880" description="Ubiquitin-related modifier 1">
    <location>
        <begin position="1"/>
        <end position="124"/>
    </location>
</feature>
<feature type="region of interest" description="Disordered" evidence="2">
    <location>
        <begin position="34"/>
        <end position="53"/>
    </location>
</feature>
<feature type="modified residue" description="1-thioglycine" evidence="1">
    <location>
        <position position="124"/>
    </location>
</feature>
<feature type="cross-link" description="Glycyl lysine isopeptide (Gly-Lys) (interchain with K-? in acceptor proteins)" evidence="1">
    <location>
        <position position="124"/>
    </location>
</feature>
<name>URM1_COPC7</name>
<evidence type="ECO:0000255" key="1">
    <source>
        <dbReference type="HAMAP-Rule" id="MF_03048"/>
    </source>
</evidence>
<evidence type="ECO:0000256" key="2">
    <source>
        <dbReference type="SAM" id="MobiDB-lite"/>
    </source>
</evidence>
<keyword id="KW-0963">Cytoplasm</keyword>
<keyword id="KW-1017">Isopeptide bond</keyword>
<keyword id="KW-1185">Reference proteome</keyword>
<keyword id="KW-0819">tRNA processing</keyword>
<keyword id="KW-0833">Ubl conjugation pathway</keyword>